<protein>
    <recommendedName>
        <fullName evidence="1">Isoleucine--tRNA ligase</fullName>
        <ecNumber evidence="1">6.1.1.5</ecNumber>
    </recommendedName>
    <alternativeName>
        <fullName evidence="1">Isoleucyl-tRNA synthetase</fullName>
        <shortName evidence="1">IleRS</shortName>
    </alternativeName>
</protein>
<name>SYI_BACC4</name>
<accession>B7H6N1</accession>
<proteinExistence type="inferred from homology"/>
<evidence type="ECO:0000255" key="1">
    <source>
        <dbReference type="HAMAP-Rule" id="MF_02002"/>
    </source>
</evidence>
<dbReference type="EC" id="6.1.1.5" evidence="1"/>
<dbReference type="EMBL" id="CP001176">
    <property type="protein sequence ID" value="ACK60246.1"/>
    <property type="molecule type" value="Genomic_DNA"/>
</dbReference>
<dbReference type="SMR" id="B7H6N1"/>
<dbReference type="KEGG" id="bcb:BCB4264_A3996"/>
<dbReference type="HOGENOM" id="CLU_001493_7_0_9"/>
<dbReference type="Proteomes" id="UP000007096">
    <property type="component" value="Chromosome"/>
</dbReference>
<dbReference type="GO" id="GO:0005829">
    <property type="term" value="C:cytosol"/>
    <property type="evidence" value="ECO:0007669"/>
    <property type="project" value="TreeGrafter"/>
</dbReference>
<dbReference type="GO" id="GO:0002161">
    <property type="term" value="F:aminoacyl-tRNA deacylase activity"/>
    <property type="evidence" value="ECO:0007669"/>
    <property type="project" value="InterPro"/>
</dbReference>
<dbReference type="GO" id="GO:0005524">
    <property type="term" value="F:ATP binding"/>
    <property type="evidence" value="ECO:0007669"/>
    <property type="project" value="UniProtKB-UniRule"/>
</dbReference>
<dbReference type="GO" id="GO:0004822">
    <property type="term" value="F:isoleucine-tRNA ligase activity"/>
    <property type="evidence" value="ECO:0007669"/>
    <property type="project" value="UniProtKB-UniRule"/>
</dbReference>
<dbReference type="GO" id="GO:0000049">
    <property type="term" value="F:tRNA binding"/>
    <property type="evidence" value="ECO:0007669"/>
    <property type="project" value="InterPro"/>
</dbReference>
<dbReference type="GO" id="GO:0008270">
    <property type="term" value="F:zinc ion binding"/>
    <property type="evidence" value="ECO:0007669"/>
    <property type="project" value="UniProtKB-UniRule"/>
</dbReference>
<dbReference type="GO" id="GO:0006428">
    <property type="term" value="P:isoleucyl-tRNA aminoacylation"/>
    <property type="evidence" value="ECO:0007669"/>
    <property type="project" value="UniProtKB-UniRule"/>
</dbReference>
<dbReference type="CDD" id="cd07960">
    <property type="entry name" value="Anticodon_Ia_Ile_BEm"/>
    <property type="match status" value="1"/>
</dbReference>
<dbReference type="CDD" id="cd00818">
    <property type="entry name" value="IleRS_core"/>
    <property type="match status" value="1"/>
</dbReference>
<dbReference type="FunFam" id="1.10.10.830:FF:000001">
    <property type="entry name" value="Isoleucine--tRNA ligase"/>
    <property type="match status" value="1"/>
</dbReference>
<dbReference type="FunFam" id="1.10.730.20:FF:000001">
    <property type="entry name" value="Isoleucine--tRNA ligase"/>
    <property type="match status" value="1"/>
</dbReference>
<dbReference type="FunFam" id="3.40.50.620:FF:000152">
    <property type="entry name" value="Isoleucine--tRNA ligase"/>
    <property type="match status" value="1"/>
</dbReference>
<dbReference type="FunFam" id="3.90.740.10:FF:000006">
    <property type="entry name" value="Isoleucine--tRNA ligase"/>
    <property type="match status" value="1"/>
</dbReference>
<dbReference type="Gene3D" id="1.10.730.20">
    <property type="match status" value="1"/>
</dbReference>
<dbReference type="Gene3D" id="3.40.50.620">
    <property type="entry name" value="HUPs"/>
    <property type="match status" value="2"/>
</dbReference>
<dbReference type="Gene3D" id="1.10.10.830">
    <property type="entry name" value="Ile-tRNA synthetase CP2 domain-like"/>
    <property type="match status" value="1"/>
</dbReference>
<dbReference type="Gene3D" id="3.90.740.10">
    <property type="entry name" value="Valyl/Leucyl/Isoleucyl-tRNA synthetase, editing domain"/>
    <property type="match status" value="1"/>
</dbReference>
<dbReference type="HAMAP" id="MF_02002">
    <property type="entry name" value="Ile_tRNA_synth_type1"/>
    <property type="match status" value="1"/>
</dbReference>
<dbReference type="InterPro" id="IPR001412">
    <property type="entry name" value="aa-tRNA-synth_I_CS"/>
</dbReference>
<dbReference type="InterPro" id="IPR002300">
    <property type="entry name" value="aa-tRNA-synth_Ia"/>
</dbReference>
<dbReference type="InterPro" id="IPR033708">
    <property type="entry name" value="Anticodon_Ile_BEm"/>
</dbReference>
<dbReference type="InterPro" id="IPR002301">
    <property type="entry name" value="Ile-tRNA-ligase"/>
</dbReference>
<dbReference type="InterPro" id="IPR023585">
    <property type="entry name" value="Ile-tRNA-ligase_type1"/>
</dbReference>
<dbReference type="InterPro" id="IPR050081">
    <property type="entry name" value="Ile-tRNA_ligase"/>
</dbReference>
<dbReference type="InterPro" id="IPR013155">
    <property type="entry name" value="M/V/L/I-tRNA-synth_anticd-bd"/>
</dbReference>
<dbReference type="InterPro" id="IPR014729">
    <property type="entry name" value="Rossmann-like_a/b/a_fold"/>
</dbReference>
<dbReference type="InterPro" id="IPR009080">
    <property type="entry name" value="tRNAsynth_Ia_anticodon-bd"/>
</dbReference>
<dbReference type="InterPro" id="IPR009008">
    <property type="entry name" value="Val/Leu/Ile-tRNA-synth_edit"/>
</dbReference>
<dbReference type="InterPro" id="IPR010663">
    <property type="entry name" value="Znf_FPG/IleRS"/>
</dbReference>
<dbReference type="NCBIfam" id="TIGR00392">
    <property type="entry name" value="ileS"/>
    <property type="match status" value="1"/>
</dbReference>
<dbReference type="PANTHER" id="PTHR42765:SF1">
    <property type="entry name" value="ISOLEUCINE--TRNA LIGASE, MITOCHONDRIAL"/>
    <property type="match status" value="1"/>
</dbReference>
<dbReference type="PANTHER" id="PTHR42765">
    <property type="entry name" value="SOLEUCYL-TRNA SYNTHETASE"/>
    <property type="match status" value="1"/>
</dbReference>
<dbReference type="Pfam" id="PF08264">
    <property type="entry name" value="Anticodon_1"/>
    <property type="match status" value="1"/>
</dbReference>
<dbReference type="Pfam" id="PF00133">
    <property type="entry name" value="tRNA-synt_1"/>
    <property type="match status" value="1"/>
</dbReference>
<dbReference type="Pfam" id="PF06827">
    <property type="entry name" value="zf-FPG_IleRS"/>
    <property type="match status" value="1"/>
</dbReference>
<dbReference type="PRINTS" id="PR00984">
    <property type="entry name" value="TRNASYNTHILE"/>
</dbReference>
<dbReference type="SUPFAM" id="SSF47323">
    <property type="entry name" value="Anticodon-binding domain of a subclass of class I aminoacyl-tRNA synthetases"/>
    <property type="match status" value="1"/>
</dbReference>
<dbReference type="SUPFAM" id="SSF52374">
    <property type="entry name" value="Nucleotidylyl transferase"/>
    <property type="match status" value="1"/>
</dbReference>
<dbReference type="SUPFAM" id="SSF50677">
    <property type="entry name" value="ValRS/IleRS/LeuRS editing domain"/>
    <property type="match status" value="1"/>
</dbReference>
<dbReference type="PROSITE" id="PS00178">
    <property type="entry name" value="AA_TRNA_LIGASE_I"/>
    <property type="match status" value="1"/>
</dbReference>
<keyword id="KW-0030">Aminoacyl-tRNA synthetase</keyword>
<keyword id="KW-0067">ATP-binding</keyword>
<keyword id="KW-0963">Cytoplasm</keyword>
<keyword id="KW-0436">Ligase</keyword>
<keyword id="KW-0479">Metal-binding</keyword>
<keyword id="KW-0547">Nucleotide-binding</keyword>
<keyword id="KW-0648">Protein biosynthesis</keyword>
<keyword id="KW-0862">Zinc</keyword>
<feature type="chain" id="PRO_1000189126" description="Isoleucine--tRNA ligase">
    <location>
        <begin position="1"/>
        <end position="921"/>
    </location>
</feature>
<feature type="short sequence motif" description="'HIGH' region">
    <location>
        <begin position="57"/>
        <end position="67"/>
    </location>
</feature>
<feature type="short sequence motif" description="'KMSKS' region">
    <location>
        <begin position="593"/>
        <end position="597"/>
    </location>
</feature>
<feature type="binding site" evidence="1">
    <location>
        <position position="552"/>
    </location>
    <ligand>
        <name>L-isoleucyl-5'-AMP</name>
        <dbReference type="ChEBI" id="CHEBI:178002"/>
    </ligand>
</feature>
<feature type="binding site" evidence="1">
    <location>
        <position position="596"/>
    </location>
    <ligand>
        <name>ATP</name>
        <dbReference type="ChEBI" id="CHEBI:30616"/>
    </ligand>
</feature>
<feature type="binding site" evidence="1">
    <location>
        <position position="888"/>
    </location>
    <ligand>
        <name>Zn(2+)</name>
        <dbReference type="ChEBI" id="CHEBI:29105"/>
    </ligand>
</feature>
<feature type="binding site" evidence="1">
    <location>
        <position position="891"/>
    </location>
    <ligand>
        <name>Zn(2+)</name>
        <dbReference type="ChEBI" id="CHEBI:29105"/>
    </ligand>
</feature>
<feature type="binding site" evidence="1">
    <location>
        <position position="908"/>
    </location>
    <ligand>
        <name>Zn(2+)</name>
        <dbReference type="ChEBI" id="CHEBI:29105"/>
    </ligand>
</feature>
<feature type="binding site" evidence="1">
    <location>
        <position position="911"/>
    </location>
    <ligand>
        <name>Zn(2+)</name>
        <dbReference type="ChEBI" id="CHEBI:29105"/>
    </ligand>
</feature>
<comment type="function">
    <text evidence="1">Catalyzes the attachment of isoleucine to tRNA(Ile). As IleRS can inadvertently accommodate and process structurally similar amino acids such as valine, to avoid such errors it has two additional distinct tRNA(Ile)-dependent editing activities. One activity is designated as 'pretransfer' editing and involves the hydrolysis of activated Val-AMP. The other activity is designated 'posttransfer' editing and involves deacylation of mischarged Val-tRNA(Ile).</text>
</comment>
<comment type="catalytic activity">
    <reaction evidence="1">
        <text>tRNA(Ile) + L-isoleucine + ATP = L-isoleucyl-tRNA(Ile) + AMP + diphosphate</text>
        <dbReference type="Rhea" id="RHEA:11060"/>
        <dbReference type="Rhea" id="RHEA-COMP:9666"/>
        <dbReference type="Rhea" id="RHEA-COMP:9695"/>
        <dbReference type="ChEBI" id="CHEBI:30616"/>
        <dbReference type="ChEBI" id="CHEBI:33019"/>
        <dbReference type="ChEBI" id="CHEBI:58045"/>
        <dbReference type="ChEBI" id="CHEBI:78442"/>
        <dbReference type="ChEBI" id="CHEBI:78528"/>
        <dbReference type="ChEBI" id="CHEBI:456215"/>
        <dbReference type="EC" id="6.1.1.5"/>
    </reaction>
</comment>
<comment type="cofactor">
    <cofactor evidence="1">
        <name>Zn(2+)</name>
        <dbReference type="ChEBI" id="CHEBI:29105"/>
    </cofactor>
    <text evidence="1">Binds 1 zinc ion per subunit.</text>
</comment>
<comment type="subunit">
    <text evidence="1">Monomer.</text>
</comment>
<comment type="subcellular location">
    <subcellularLocation>
        <location evidence="1">Cytoplasm</location>
    </subcellularLocation>
</comment>
<comment type="domain">
    <text evidence="1">IleRS has two distinct active sites: one for aminoacylation and one for editing. The misactivated valine is translocated from the active site to the editing site, which sterically excludes the correctly activated isoleucine. The single editing site contains two valyl binding pockets, one specific for each substrate (Val-AMP or Val-tRNA(Ile)).</text>
</comment>
<comment type="similarity">
    <text evidence="1">Belongs to the class-I aminoacyl-tRNA synthetase family. IleS type 1 subfamily.</text>
</comment>
<gene>
    <name evidence="1" type="primary">ileS</name>
    <name type="ordered locus">BCB4264_A3996</name>
</gene>
<organism>
    <name type="scientific">Bacillus cereus (strain B4264)</name>
    <dbReference type="NCBI Taxonomy" id="405532"/>
    <lineage>
        <taxon>Bacteria</taxon>
        <taxon>Bacillati</taxon>
        <taxon>Bacillota</taxon>
        <taxon>Bacilli</taxon>
        <taxon>Bacillales</taxon>
        <taxon>Bacillaceae</taxon>
        <taxon>Bacillus</taxon>
        <taxon>Bacillus cereus group</taxon>
    </lineage>
</organism>
<reference key="1">
    <citation type="submission" date="2008-10" db="EMBL/GenBank/DDBJ databases">
        <title>Genome sequence of Bacillus cereus B4264.</title>
        <authorList>
            <person name="Dodson R.J."/>
            <person name="Durkin A.S."/>
            <person name="Rosovitz M.J."/>
            <person name="Rasko D.A."/>
            <person name="Hoffmaster A."/>
            <person name="Ravel J."/>
            <person name="Sutton G."/>
        </authorList>
    </citation>
    <scope>NUCLEOTIDE SEQUENCE [LARGE SCALE GENOMIC DNA]</scope>
    <source>
        <strain>B4264</strain>
    </source>
</reference>
<sequence length="921" mass="104562">MEYKNTLLMPKTEFPMRGNLPKREPAMQEKWAEMNIYEKVQEHTKGRPLFVLHDGPPYANGDIHMGHALNKVLKDFIVRYKSMTGFSAPYVPGWDTHGLPIEQALTNKGVKRKEMTVAEFRKLCAEYAYEQVERQREQFKRLGVRADWDNPYITLEPAYEAQQIKVFGDMAKKGYIYKGQKPVYWSPTSESALAEAEIEYQDKKSASIYVAFPVKDGKNVLEGDEKYIIWTTTPWTLPANLGISVHPELEYSIVKVNDEKYIIASELFETVAKTLEWENAEVVKTVKGSELEYTVAKHPFYDRDSLVMLGDHVTTDAGTGCVHTAPGHGEDDFVVGKKYGLEVLCPVDDKGVLTNEAPGFEGLFYDKANKPITEKLEEVGALLKLTFITHSYPHDWRTKKPIIFRATAQWFASIEAFRKELIEAVAETKWVPAWGETRLHNMVRDRGDWCISRQRAWGVPIPVFYAENGDPIITDETINHVADLFREHGSNVWFEREAKDLLPEGFTHPGSPNGEFRKETDIMDVWFDSGSSHQAVLEEREDLQRPADLYLEGSDQYRGWFNSSLSTAVAVTGKAPYKGVLSHGFVLDGEGRKMSKSIGNIVVPKKIMDQLGGDILRLWVSSVDYQSDVRISDDILKQVAEVYRKIRNTFRFLLGNLDDFKPSENAVAVAELREVDRYMLVKLNDLITKVKEAYETYDFAAVYHAIHNFCTIDLSSFYLDFAKDILYIEGANHEDRRAIQTVLYDVLVALTKLVTPILPHTADEVWPYIPGVTEESVQLTDMPEAVQLDDAEALKTKWDAFMTLRDDVLKALEVARNEKVIGKSLNASITLYPTAEMKAMLESISEDLKQLFIVSEYKLGGMMDEAPADAPKYEHTAVVVAQATGETCERCWVVSETIGKDAEHETLCERCATVVKENYVK</sequence>